<reference evidence="4" key="1">
    <citation type="journal article" date="2008" name="Phytochemistry">
        <title>The alpine violet, Viola biflora, is a rich source of cyclotides with potent cytotoxicity.</title>
        <authorList>
            <person name="Herrmann A."/>
            <person name="Burman R."/>
            <person name="Mylne J.S."/>
            <person name="Karlsson G."/>
            <person name="Gullbo J."/>
            <person name="Craik D.J."/>
            <person name="Clark R.J."/>
            <person name="Goeransson U."/>
        </authorList>
    </citation>
    <scope>PROTEIN SEQUENCE</scope>
    <scope>FUNCTION</scope>
    <scope>MASS SPECTROMETRY</scope>
</reference>
<organism>
    <name type="scientific">Viola biflora</name>
    <name type="common">Yellow wood violet</name>
    <dbReference type="NCBI Taxonomy" id="214529"/>
    <lineage>
        <taxon>Eukaryota</taxon>
        <taxon>Viridiplantae</taxon>
        <taxon>Streptophyta</taxon>
        <taxon>Embryophyta</taxon>
        <taxon>Tracheophyta</taxon>
        <taxon>Spermatophyta</taxon>
        <taxon>Magnoliopsida</taxon>
        <taxon>eudicotyledons</taxon>
        <taxon>Gunneridae</taxon>
        <taxon>Pentapetalae</taxon>
        <taxon>rosids</taxon>
        <taxon>fabids</taxon>
        <taxon>Malpighiales</taxon>
        <taxon>Violaceae</taxon>
        <taxon>Viola</taxon>
        <taxon>Viola subgen. Viola</taxon>
        <taxon>Viola sect. Chamaemelanium</taxon>
    </lineage>
</organism>
<sequence length="31" mass="3297">GLLPCAESCVYIPCLTTVIGCSCKSKVCYKN</sequence>
<keyword id="KW-0903">Direct protein sequencing</keyword>
<keyword id="KW-1015">Disulfide bond</keyword>
<keyword id="KW-0960">Knottin</keyword>
<keyword id="KW-0611">Plant defense</keyword>
<accession>P85246</accession>
<dbReference type="SMR" id="P85246"/>
<dbReference type="GO" id="GO:0006952">
    <property type="term" value="P:defense response"/>
    <property type="evidence" value="ECO:0007669"/>
    <property type="project" value="UniProtKB-KW"/>
</dbReference>
<dbReference type="InterPro" id="IPR005535">
    <property type="entry name" value="Cyclotide"/>
</dbReference>
<dbReference type="InterPro" id="IPR012323">
    <property type="entry name" value="Cyclotide_bracelet_CS"/>
</dbReference>
<dbReference type="InterPro" id="IPR036146">
    <property type="entry name" value="Cyclotide_sf"/>
</dbReference>
<dbReference type="Pfam" id="PF03784">
    <property type="entry name" value="Cyclotide"/>
    <property type="match status" value="1"/>
</dbReference>
<dbReference type="PIRSF" id="PIRSF037891">
    <property type="entry name" value="Cycloviolacin"/>
    <property type="match status" value="1"/>
</dbReference>
<dbReference type="SUPFAM" id="SSF57038">
    <property type="entry name" value="Cyclotides"/>
    <property type="match status" value="1"/>
</dbReference>
<dbReference type="PROSITE" id="PS51052">
    <property type="entry name" value="CYCLOTIDE"/>
    <property type="match status" value="1"/>
</dbReference>
<dbReference type="PROSITE" id="PS60008">
    <property type="entry name" value="CYCLOTIDE_BRACELET"/>
    <property type="match status" value="1"/>
</dbReference>
<comment type="function">
    <text evidence="2 3 4">Probably participates in a plant defense mechanism. Has cytotoxic activity, active against a human lymphoma cell line with an IC(50) of 1.6 uM.</text>
</comment>
<comment type="domain">
    <text evidence="1">The presence of a 'disulfide through disulfide knot' structurally defines this protein as a knottin.</text>
</comment>
<comment type="PTM">
    <text evidence="2 3">This is a cyclic peptide.</text>
</comment>
<comment type="mass spectrometry" mass="3272.0" method="Electrospray" evidence="3"/>
<comment type="similarity">
    <text evidence="2">Belongs to the cyclotide family. Bracelet subfamily.</text>
</comment>
<comment type="caution">
    <text evidence="4">This peptide is cyclic. The start position was chosen by similarity to OAK1 (kalata-B1) for which the DNA sequence is known.</text>
</comment>
<protein>
    <recommendedName>
        <fullName>Cyclotide vibi-H</fullName>
    </recommendedName>
</protein>
<name>CYVH_VIOBI</name>
<proteinExistence type="evidence at protein level"/>
<evidence type="ECO:0000250" key="1">
    <source>
        <dbReference type="UniProtKB" id="P82230"/>
    </source>
</evidence>
<evidence type="ECO:0000255" key="2">
    <source>
        <dbReference type="PROSITE-ProRule" id="PRU00395"/>
    </source>
</evidence>
<evidence type="ECO:0000269" key="3">
    <source>
    </source>
</evidence>
<evidence type="ECO:0000305" key="4"/>
<feature type="peptide" id="PRO_0000341430" description="Cyclotide vibi-H">
    <location>
        <begin position="1"/>
        <end position="31"/>
    </location>
</feature>
<feature type="disulfide bond" evidence="1 2">
    <location>
        <begin position="5"/>
        <end position="21"/>
    </location>
</feature>
<feature type="disulfide bond" evidence="1 2">
    <location>
        <begin position="9"/>
        <end position="23"/>
    </location>
</feature>
<feature type="disulfide bond" evidence="1 2">
    <location>
        <begin position="14"/>
        <end position="28"/>
    </location>
</feature>
<feature type="cross-link" description="Cyclopeptide (Gly-Asn)" evidence="3">
    <location>
        <begin position="1"/>
        <end position="31"/>
    </location>
</feature>